<proteinExistence type="inferred from homology"/>
<gene>
    <name type="primary">BLS1</name>
    <name type="ORF">VL3_3442</name>
</gene>
<dbReference type="EMBL" id="AEJS01000051">
    <property type="protein sequence ID" value="EGA85585.1"/>
    <property type="status" value="ALT_INIT"/>
    <property type="molecule type" value="Genomic_DNA"/>
</dbReference>
<dbReference type="SMR" id="E7QIC5"/>
<dbReference type="HOGENOM" id="CLU_150164_0_0_1"/>
<dbReference type="OrthoDB" id="20018at2759"/>
<dbReference type="GO" id="GO:0005768">
    <property type="term" value="C:endosome"/>
    <property type="evidence" value="ECO:0007669"/>
    <property type="project" value="UniProtKB-SubCell"/>
</dbReference>
<accession>E7QIC5</accession>
<organism>
    <name type="scientific">Saccharomyces cerevisiae (strain Zymaflore VL3)</name>
    <name type="common">Baker's yeast</name>
    <dbReference type="NCBI Taxonomy" id="764100"/>
    <lineage>
        <taxon>Eukaryota</taxon>
        <taxon>Fungi</taxon>
        <taxon>Dikarya</taxon>
        <taxon>Ascomycota</taxon>
        <taxon>Saccharomycotina</taxon>
        <taxon>Saccharomycetes</taxon>
        <taxon>Saccharomycetales</taxon>
        <taxon>Saccharomycetaceae</taxon>
        <taxon>Saccharomyces</taxon>
    </lineage>
</organism>
<sequence length="122" mass="14549">MFLTFSMCVNWIIVKMPNRSEELDRLLDKIINSPHRTEASKTLQEIENNQSYILNVQLKKLLRLHDDSFKNKCVSPINYMLEKYTPYMGHTEALQKEAELVDRDLRILEMTYQLIEKNRNSK</sequence>
<comment type="function">
    <text evidence="1">Component of the biogenesis of lysosome-related organelles complex-1 (BLOC-1), a complex involved in endosomal cargo sorting.</text>
</comment>
<comment type="subunit">
    <text evidence="1">Component of the biogenesis of lysosome-related organelles complex-1 (BLOC-1) composed of at least BLI1, BLS1, CNL1, KXD1, SNN1 and VAB2.</text>
</comment>
<comment type="subcellular location">
    <subcellularLocation>
        <location evidence="1">Endosome</location>
    </subcellularLocation>
</comment>
<comment type="similarity">
    <text evidence="3">Belongs to the BLOC1S1 family.</text>
</comment>
<comment type="sequence caution" evidence="3">
    <conflict type="erroneous initiation">
        <sequence resource="EMBL-CDS" id="EGA85585"/>
    </conflict>
    <text>Truncated N-terminus.</text>
</comment>
<name>BL1S1_YEASZ</name>
<reference key="1">
    <citation type="journal article" date="2011" name="PLoS Genet.">
        <title>Whole-genome comparison reveals novel genetic elements that characterize the genome of industrial strains of Saccharomyces cerevisiae.</title>
        <authorList>
            <person name="Borneman A.R."/>
            <person name="Desany B.A."/>
            <person name="Riches D."/>
            <person name="Affourtit J.P."/>
            <person name="Forgan A.H."/>
            <person name="Pretorius I.S."/>
            <person name="Egholm M."/>
            <person name="Chambers P.J."/>
        </authorList>
    </citation>
    <scope>NUCLEOTIDE SEQUENCE [LARGE SCALE GENOMIC DNA]</scope>
    <source>
        <strain>Zymaflore VL3</strain>
    </source>
</reference>
<keyword id="KW-0967">Endosome</keyword>
<keyword id="KW-0597">Phosphoprotein</keyword>
<keyword id="KW-0813">Transport</keyword>
<feature type="chain" id="PRO_0000410639" description="Biogenesis of lysosome-related organelles complex 1 subunit BLS1">
    <location>
        <begin position="1"/>
        <end position="122"/>
    </location>
</feature>
<feature type="modified residue" description="Phosphoserine" evidence="2">
    <location>
        <position position="33"/>
    </location>
</feature>
<protein>
    <recommendedName>
        <fullName>Biogenesis of lysosome-related organelles complex 1 subunit BLS1</fullName>
        <shortName>BLOC-1 subunit BLS1</shortName>
    </recommendedName>
    <alternativeName>
        <fullName>BLOS1-homolog</fullName>
    </alternativeName>
</protein>
<evidence type="ECO:0000250" key="1"/>
<evidence type="ECO:0000250" key="2">
    <source>
        <dbReference type="UniProtKB" id="Q06071"/>
    </source>
</evidence>
<evidence type="ECO:0000305" key="3"/>